<dbReference type="EC" id="4.3.3.7" evidence="1"/>
<dbReference type="EMBL" id="CP000302">
    <property type="protein sequence ID" value="ABE55019.1"/>
    <property type="molecule type" value="Genomic_DNA"/>
</dbReference>
<dbReference type="RefSeq" id="WP_011496176.1">
    <property type="nucleotide sequence ID" value="NC_007954.1"/>
</dbReference>
<dbReference type="SMR" id="Q12NF7"/>
<dbReference type="STRING" id="318161.Sden_1735"/>
<dbReference type="KEGG" id="sdn:Sden_1735"/>
<dbReference type="eggNOG" id="COG0329">
    <property type="taxonomic scope" value="Bacteria"/>
</dbReference>
<dbReference type="HOGENOM" id="CLU_049343_7_1_6"/>
<dbReference type="OrthoDB" id="9782828at2"/>
<dbReference type="UniPathway" id="UPA00034">
    <property type="reaction ID" value="UER00017"/>
</dbReference>
<dbReference type="Proteomes" id="UP000001982">
    <property type="component" value="Chromosome"/>
</dbReference>
<dbReference type="GO" id="GO:0005829">
    <property type="term" value="C:cytosol"/>
    <property type="evidence" value="ECO:0007669"/>
    <property type="project" value="TreeGrafter"/>
</dbReference>
<dbReference type="GO" id="GO:0008840">
    <property type="term" value="F:4-hydroxy-tetrahydrodipicolinate synthase activity"/>
    <property type="evidence" value="ECO:0007669"/>
    <property type="project" value="UniProtKB-UniRule"/>
</dbReference>
<dbReference type="GO" id="GO:0019877">
    <property type="term" value="P:diaminopimelate biosynthetic process"/>
    <property type="evidence" value="ECO:0007669"/>
    <property type="project" value="UniProtKB-UniRule"/>
</dbReference>
<dbReference type="GO" id="GO:0009089">
    <property type="term" value="P:lysine biosynthetic process via diaminopimelate"/>
    <property type="evidence" value="ECO:0007669"/>
    <property type="project" value="UniProtKB-UniRule"/>
</dbReference>
<dbReference type="CDD" id="cd00950">
    <property type="entry name" value="DHDPS"/>
    <property type="match status" value="1"/>
</dbReference>
<dbReference type="Gene3D" id="3.20.20.70">
    <property type="entry name" value="Aldolase class I"/>
    <property type="match status" value="1"/>
</dbReference>
<dbReference type="HAMAP" id="MF_00418">
    <property type="entry name" value="DapA"/>
    <property type="match status" value="1"/>
</dbReference>
<dbReference type="InterPro" id="IPR013785">
    <property type="entry name" value="Aldolase_TIM"/>
</dbReference>
<dbReference type="InterPro" id="IPR005263">
    <property type="entry name" value="DapA"/>
</dbReference>
<dbReference type="InterPro" id="IPR002220">
    <property type="entry name" value="DapA-like"/>
</dbReference>
<dbReference type="InterPro" id="IPR020625">
    <property type="entry name" value="Schiff_base-form_aldolases_AS"/>
</dbReference>
<dbReference type="InterPro" id="IPR020624">
    <property type="entry name" value="Schiff_base-form_aldolases_CS"/>
</dbReference>
<dbReference type="NCBIfam" id="TIGR00674">
    <property type="entry name" value="dapA"/>
    <property type="match status" value="1"/>
</dbReference>
<dbReference type="PANTHER" id="PTHR12128:SF66">
    <property type="entry name" value="4-HYDROXY-2-OXOGLUTARATE ALDOLASE, MITOCHONDRIAL"/>
    <property type="match status" value="1"/>
</dbReference>
<dbReference type="PANTHER" id="PTHR12128">
    <property type="entry name" value="DIHYDRODIPICOLINATE SYNTHASE"/>
    <property type="match status" value="1"/>
</dbReference>
<dbReference type="Pfam" id="PF00701">
    <property type="entry name" value="DHDPS"/>
    <property type="match status" value="1"/>
</dbReference>
<dbReference type="PIRSF" id="PIRSF001365">
    <property type="entry name" value="DHDPS"/>
    <property type="match status" value="1"/>
</dbReference>
<dbReference type="PRINTS" id="PR00146">
    <property type="entry name" value="DHPICSNTHASE"/>
</dbReference>
<dbReference type="SMART" id="SM01130">
    <property type="entry name" value="DHDPS"/>
    <property type="match status" value="1"/>
</dbReference>
<dbReference type="SUPFAM" id="SSF51569">
    <property type="entry name" value="Aldolase"/>
    <property type="match status" value="1"/>
</dbReference>
<dbReference type="PROSITE" id="PS00665">
    <property type="entry name" value="DHDPS_1"/>
    <property type="match status" value="1"/>
</dbReference>
<dbReference type="PROSITE" id="PS00666">
    <property type="entry name" value="DHDPS_2"/>
    <property type="match status" value="1"/>
</dbReference>
<comment type="function">
    <text evidence="1">Catalyzes the condensation of (S)-aspartate-beta-semialdehyde [(S)-ASA] and pyruvate to 4-hydroxy-tetrahydrodipicolinate (HTPA).</text>
</comment>
<comment type="catalytic activity">
    <reaction evidence="1">
        <text>L-aspartate 4-semialdehyde + pyruvate = (2S,4S)-4-hydroxy-2,3,4,5-tetrahydrodipicolinate + H2O + H(+)</text>
        <dbReference type="Rhea" id="RHEA:34171"/>
        <dbReference type="ChEBI" id="CHEBI:15361"/>
        <dbReference type="ChEBI" id="CHEBI:15377"/>
        <dbReference type="ChEBI" id="CHEBI:15378"/>
        <dbReference type="ChEBI" id="CHEBI:67139"/>
        <dbReference type="ChEBI" id="CHEBI:537519"/>
        <dbReference type="EC" id="4.3.3.7"/>
    </reaction>
</comment>
<comment type="pathway">
    <text evidence="1">Amino-acid biosynthesis; L-lysine biosynthesis via DAP pathway; (S)-tetrahydrodipicolinate from L-aspartate: step 3/4.</text>
</comment>
<comment type="subunit">
    <text evidence="1">Homotetramer; dimer of dimers.</text>
</comment>
<comment type="subcellular location">
    <subcellularLocation>
        <location evidence="1">Cytoplasm</location>
    </subcellularLocation>
</comment>
<comment type="similarity">
    <text evidence="1">Belongs to the DapA family.</text>
</comment>
<comment type="caution">
    <text evidence="2">Was originally thought to be a dihydrodipicolinate synthase (DHDPS), catalyzing the condensation of (S)-aspartate-beta-semialdehyde [(S)-ASA] and pyruvate to dihydrodipicolinate (DHDP). However, it was shown in E.coli that the product of the enzymatic reaction is not dihydrodipicolinate but in fact (4S)-4-hydroxy-2,3,4,5-tetrahydro-(2S)-dipicolinic acid (HTPA), and that the consecutive dehydration reaction leading to DHDP is not spontaneous but catalyzed by DapB.</text>
</comment>
<sequence>MLKGSIVALITPMNRDGSVDNASLERLVEFHINQGTDAIVAVGTTGESSTLAQSEHIAVVEQVVSFAAGRIAVIAGNGANATAHGVELTQKLAKTGVDAMLGVTPYYNKPSPKGIIAHYTAIANSTDIAQILYNVPGRTCLDMQPEVIAELAKVSNIIGVKEATGDVSRVAKLRALCGDDFLLYSGDDASAKDFLLLGGDGVISVANNIVPKAFKVMCDAALSGNAELAKIHDDTLRGLYGSLFCEANPIPVKWASHQLGLITNAYIRLPLTELSEQFHGLLLETMKQAQLKV</sequence>
<protein>
    <recommendedName>
        <fullName evidence="1">4-hydroxy-tetrahydrodipicolinate synthase</fullName>
        <shortName evidence="1">HTPA synthase</shortName>
        <ecNumber evidence="1">4.3.3.7</ecNumber>
    </recommendedName>
</protein>
<evidence type="ECO:0000255" key="1">
    <source>
        <dbReference type="HAMAP-Rule" id="MF_00418"/>
    </source>
</evidence>
<evidence type="ECO:0000305" key="2"/>
<feature type="chain" id="PRO_1000050264" description="4-hydroxy-tetrahydrodipicolinate synthase">
    <location>
        <begin position="1"/>
        <end position="293"/>
    </location>
</feature>
<feature type="active site" description="Proton donor/acceptor" evidence="1">
    <location>
        <position position="133"/>
    </location>
</feature>
<feature type="active site" description="Schiff-base intermediate with substrate" evidence="1">
    <location>
        <position position="161"/>
    </location>
</feature>
<feature type="binding site" evidence="1">
    <location>
        <position position="45"/>
    </location>
    <ligand>
        <name>pyruvate</name>
        <dbReference type="ChEBI" id="CHEBI:15361"/>
    </ligand>
</feature>
<feature type="binding site" evidence="1">
    <location>
        <position position="203"/>
    </location>
    <ligand>
        <name>pyruvate</name>
        <dbReference type="ChEBI" id="CHEBI:15361"/>
    </ligand>
</feature>
<feature type="site" description="Part of a proton relay during catalysis" evidence="1">
    <location>
        <position position="44"/>
    </location>
</feature>
<feature type="site" description="Part of a proton relay during catalysis" evidence="1">
    <location>
        <position position="107"/>
    </location>
</feature>
<organism>
    <name type="scientific">Shewanella denitrificans (strain OS217 / ATCC BAA-1090 / DSM 15013)</name>
    <dbReference type="NCBI Taxonomy" id="318161"/>
    <lineage>
        <taxon>Bacteria</taxon>
        <taxon>Pseudomonadati</taxon>
        <taxon>Pseudomonadota</taxon>
        <taxon>Gammaproteobacteria</taxon>
        <taxon>Alteromonadales</taxon>
        <taxon>Shewanellaceae</taxon>
        <taxon>Shewanella</taxon>
    </lineage>
</organism>
<name>DAPA_SHEDO</name>
<proteinExistence type="inferred from homology"/>
<keyword id="KW-0028">Amino-acid biosynthesis</keyword>
<keyword id="KW-0963">Cytoplasm</keyword>
<keyword id="KW-0220">Diaminopimelate biosynthesis</keyword>
<keyword id="KW-0456">Lyase</keyword>
<keyword id="KW-0457">Lysine biosynthesis</keyword>
<keyword id="KW-1185">Reference proteome</keyword>
<keyword id="KW-0704">Schiff base</keyword>
<gene>
    <name evidence="1" type="primary">dapA</name>
    <name type="ordered locus">Sden_1735</name>
</gene>
<accession>Q12NF7</accession>
<reference key="1">
    <citation type="submission" date="2006-03" db="EMBL/GenBank/DDBJ databases">
        <title>Complete sequence of Shewanella denitrificans OS217.</title>
        <authorList>
            <consortium name="US DOE Joint Genome Institute"/>
            <person name="Copeland A."/>
            <person name="Lucas S."/>
            <person name="Lapidus A."/>
            <person name="Barry K."/>
            <person name="Detter J.C."/>
            <person name="Glavina del Rio T."/>
            <person name="Hammon N."/>
            <person name="Israni S."/>
            <person name="Dalin E."/>
            <person name="Tice H."/>
            <person name="Pitluck S."/>
            <person name="Brettin T."/>
            <person name="Bruce D."/>
            <person name="Han C."/>
            <person name="Tapia R."/>
            <person name="Gilna P."/>
            <person name="Kiss H."/>
            <person name="Schmutz J."/>
            <person name="Larimer F."/>
            <person name="Land M."/>
            <person name="Hauser L."/>
            <person name="Kyrpides N."/>
            <person name="Lykidis A."/>
            <person name="Richardson P."/>
        </authorList>
    </citation>
    <scope>NUCLEOTIDE SEQUENCE [LARGE SCALE GENOMIC DNA]</scope>
    <source>
        <strain>OS217 / ATCC BAA-1090 / DSM 15013</strain>
    </source>
</reference>